<sequence length="406" mass="46276">MQQTSNSNRTMMSFRRFTTTKLQLSHWDFTIYDTYIKMTNIHHITTTSNDSCLPTCPPLAEILKDKIPGYAFYSSAWQCQTMWMRFLIFGDEDNCIKTQLMFIDRSAENINIRLQHASYQMAPAHSLVFYIFPIILLRLDGLYLRVLPDKHPGVMDASCSQTWSCLNTPMPVVRLQGGMLSWDDEDMPFMLGQKTKPFLSKAVKVHALADEVCKVNDVCMGDNYMKIHLDFHFALDKHLPVDICMSPTNNTVLSFKFNPFVKTPWEPTPAKVPIVYMGEPVLIPGSCSTIVEYCNRYYVAKGLRITAIIVSVETDDTEFETDVCEWASECTAKIMVSNKSLFPRTLAPGTHIANAHFLLAERHFFSRILSDKNLKKLSTCIKLPGGFWVNAAKLPKLCKTCLSERV</sequence>
<dbReference type="EMBL" id="AF005370">
    <property type="protein sequence ID" value="AAC58063.1"/>
    <property type="molecule type" value="Genomic_DNA"/>
</dbReference>
<dbReference type="PIR" id="T03111">
    <property type="entry name" value="T03111"/>
</dbReference>
<dbReference type="RefSeq" id="NP_065515.1">
    <property type="nucleotide sequence ID" value="NC_002531.1"/>
</dbReference>
<dbReference type="KEGG" id="vg:911751"/>
<dbReference type="Proteomes" id="UP000000941">
    <property type="component" value="Segment"/>
</dbReference>
<dbReference type="InterPro" id="IPR006882">
    <property type="entry name" value="Herpes_Orf11"/>
</dbReference>
<dbReference type="Pfam" id="PF04797">
    <property type="entry name" value="Herpes_ORF11"/>
    <property type="match status" value="1"/>
</dbReference>
<organismHost>
    <name type="scientific">Connochaetes taurinus</name>
    <name type="common">Blue wildebeest</name>
    <dbReference type="NCBI Taxonomy" id="9927"/>
</organismHost>
<reference key="1">
    <citation type="journal article" date="1997" name="J. Virol.">
        <title>Primary structure of the alcelaphine herpesvirus 1 genome.</title>
        <authorList>
            <person name="Ensser A."/>
            <person name="Pflanz R."/>
            <person name="Fleckenstein B."/>
        </authorList>
    </citation>
    <scope>NUCLEOTIDE SEQUENCE [LARGE SCALE GENOMIC DNA]</scope>
</reference>
<name>VG11_ALHV1</name>
<feature type="chain" id="PRO_0000405729" description="Uncharacterized gene 11 protein">
    <location>
        <begin position="1"/>
        <end position="406"/>
    </location>
</feature>
<organism>
    <name type="scientific">Alcelaphine herpesvirus 1 (strain C500)</name>
    <name type="common">AlHV-1</name>
    <name type="synonym">Malignant catarrhal fever virus</name>
    <dbReference type="NCBI Taxonomy" id="654901"/>
    <lineage>
        <taxon>Viruses</taxon>
        <taxon>Duplodnaviria</taxon>
        <taxon>Heunggongvirae</taxon>
        <taxon>Peploviricota</taxon>
        <taxon>Herviviricetes</taxon>
        <taxon>Herpesvirales</taxon>
        <taxon>Orthoherpesviridae</taxon>
        <taxon>Gammaherpesvirinae</taxon>
        <taxon>Macavirus</taxon>
        <taxon>Macavirus alcelaphinegamma1</taxon>
    </lineage>
</organism>
<protein>
    <recommendedName>
        <fullName>Uncharacterized gene 11 protein</fullName>
    </recommendedName>
</protein>
<gene>
    <name type="primary">11</name>
</gene>
<keyword id="KW-1185">Reference proteome</keyword>
<proteinExistence type="predicted"/>
<accession>O36366</accession>